<protein>
    <recommendedName>
        <fullName evidence="1">Small ribosomal subunit protein uS4</fullName>
    </recommendedName>
    <alternativeName>
        <fullName evidence="2">30S ribosomal protein S4</fullName>
    </alternativeName>
</protein>
<proteinExistence type="inferred from homology"/>
<gene>
    <name evidence="1" type="primary">rpsD</name>
    <name type="ordered locus">Pmob_0763</name>
</gene>
<reference key="1">
    <citation type="submission" date="2007-11" db="EMBL/GenBank/DDBJ databases">
        <title>Complete sequence of Petroga mobilis SJ95.</title>
        <authorList>
            <consortium name="US DOE Joint Genome Institute"/>
            <person name="Copeland A."/>
            <person name="Lucas S."/>
            <person name="Lapidus A."/>
            <person name="Barry K."/>
            <person name="Glavina del Rio T."/>
            <person name="Dalin E."/>
            <person name="Tice H."/>
            <person name="Pitluck S."/>
            <person name="Meincke L."/>
            <person name="Brettin T."/>
            <person name="Bruce D."/>
            <person name="Detter J.C."/>
            <person name="Han C."/>
            <person name="Kuske C.R."/>
            <person name="Schmutz J."/>
            <person name="Larimer F."/>
            <person name="Land M."/>
            <person name="Hauser L."/>
            <person name="Kyrpides N."/>
            <person name="Mikhailova N."/>
            <person name="Noll K."/>
            <person name="Richardson P."/>
        </authorList>
    </citation>
    <scope>NUCLEOTIDE SEQUENCE [LARGE SCALE GENOMIC DNA]</scope>
    <source>
        <strain>DSM 10674 / SJ95</strain>
    </source>
</reference>
<feature type="chain" id="PRO_1000085983" description="Small ribosomal subunit protein uS4">
    <location>
        <begin position="1"/>
        <end position="211"/>
    </location>
</feature>
<feature type="domain" description="S4 RNA-binding" evidence="1">
    <location>
        <begin position="99"/>
        <end position="160"/>
    </location>
</feature>
<comment type="function">
    <text evidence="1">One of the primary rRNA binding proteins, it binds directly to 16S rRNA where it nucleates assembly of the body of the 30S subunit.</text>
</comment>
<comment type="function">
    <text evidence="1">With S5 and S12 plays an important role in translational accuracy.</text>
</comment>
<comment type="subunit">
    <text evidence="1">Part of the 30S ribosomal subunit. Contacts protein S5. The interaction surface between S4 and S5 is involved in control of translational fidelity.</text>
</comment>
<comment type="similarity">
    <text evidence="1">Belongs to the universal ribosomal protein uS4 family.</text>
</comment>
<accession>A9BFZ1</accession>
<dbReference type="EMBL" id="CP000879">
    <property type="protein sequence ID" value="ABX31487.1"/>
    <property type="molecule type" value="Genomic_DNA"/>
</dbReference>
<dbReference type="RefSeq" id="WP_012208590.1">
    <property type="nucleotide sequence ID" value="NC_010003.1"/>
</dbReference>
<dbReference type="SMR" id="A9BFZ1"/>
<dbReference type="STRING" id="403833.Pmob_0763"/>
<dbReference type="KEGG" id="pmo:Pmob_0763"/>
<dbReference type="eggNOG" id="COG0522">
    <property type="taxonomic scope" value="Bacteria"/>
</dbReference>
<dbReference type="HOGENOM" id="CLU_092403_0_0_0"/>
<dbReference type="OrthoDB" id="9803672at2"/>
<dbReference type="Proteomes" id="UP000000789">
    <property type="component" value="Chromosome"/>
</dbReference>
<dbReference type="GO" id="GO:0015935">
    <property type="term" value="C:small ribosomal subunit"/>
    <property type="evidence" value="ECO:0007669"/>
    <property type="project" value="InterPro"/>
</dbReference>
<dbReference type="GO" id="GO:0019843">
    <property type="term" value="F:rRNA binding"/>
    <property type="evidence" value="ECO:0007669"/>
    <property type="project" value="UniProtKB-UniRule"/>
</dbReference>
<dbReference type="GO" id="GO:0003735">
    <property type="term" value="F:structural constituent of ribosome"/>
    <property type="evidence" value="ECO:0007669"/>
    <property type="project" value="InterPro"/>
</dbReference>
<dbReference type="GO" id="GO:0042274">
    <property type="term" value="P:ribosomal small subunit biogenesis"/>
    <property type="evidence" value="ECO:0007669"/>
    <property type="project" value="TreeGrafter"/>
</dbReference>
<dbReference type="GO" id="GO:0006412">
    <property type="term" value="P:translation"/>
    <property type="evidence" value="ECO:0007669"/>
    <property type="project" value="UniProtKB-UniRule"/>
</dbReference>
<dbReference type="CDD" id="cd00165">
    <property type="entry name" value="S4"/>
    <property type="match status" value="1"/>
</dbReference>
<dbReference type="FunFam" id="1.10.1050.10:FF:000001">
    <property type="entry name" value="30S ribosomal protein S4"/>
    <property type="match status" value="1"/>
</dbReference>
<dbReference type="FunFam" id="3.10.290.10:FF:000001">
    <property type="entry name" value="30S ribosomal protein S4"/>
    <property type="match status" value="1"/>
</dbReference>
<dbReference type="Gene3D" id="1.10.1050.10">
    <property type="entry name" value="Ribosomal Protein S4 Delta 41, Chain A, domain 1"/>
    <property type="match status" value="1"/>
</dbReference>
<dbReference type="Gene3D" id="3.10.290.10">
    <property type="entry name" value="RNA-binding S4 domain"/>
    <property type="match status" value="1"/>
</dbReference>
<dbReference type="HAMAP" id="MF_01306_B">
    <property type="entry name" value="Ribosomal_uS4_B"/>
    <property type="match status" value="1"/>
</dbReference>
<dbReference type="InterPro" id="IPR022801">
    <property type="entry name" value="Ribosomal_uS4"/>
</dbReference>
<dbReference type="InterPro" id="IPR005709">
    <property type="entry name" value="Ribosomal_uS4_bac-type"/>
</dbReference>
<dbReference type="InterPro" id="IPR001912">
    <property type="entry name" value="Ribosomal_uS4_N"/>
</dbReference>
<dbReference type="InterPro" id="IPR002942">
    <property type="entry name" value="S4_RNA-bd"/>
</dbReference>
<dbReference type="InterPro" id="IPR036986">
    <property type="entry name" value="S4_RNA-bd_sf"/>
</dbReference>
<dbReference type="NCBIfam" id="NF003717">
    <property type="entry name" value="PRK05327.1"/>
    <property type="match status" value="1"/>
</dbReference>
<dbReference type="NCBIfam" id="TIGR01017">
    <property type="entry name" value="rpsD_bact"/>
    <property type="match status" value="1"/>
</dbReference>
<dbReference type="PANTHER" id="PTHR11831">
    <property type="entry name" value="30S 40S RIBOSOMAL PROTEIN"/>
    <property type="match status" value="1"/>
</dbReference>
<dbReference type="PANTHER" id="PTHR11831:SF4">
    <property type="entry name" value="SMALL RIBOSOMAL SUBUNIT PROTEIN US4M"/>
    <property type="match status" value="1"/>
</dbReference>
<dbReference type="Pfam" id="PF00163">
    <property type="entry name" value="Ribosomal_S4"/>
    <property type="match status" value="1"/>
</dbReference>
<dbReference type="Pfam" id="PF01479">
    <property type="entry name" value="S4"/>
    <property type="match status" value="1"/>
</dbReference>
<dbReference type="SMART" id="SM01390">
    <property type="entry name" value="Ribosomal_S4"/>
    <property type="match status" value="1"/>
</dbReference>
<dbReference type="SMART" id="SM00363">
    <property type="entry name" value="S4"/>
    <property type="match status" value="1"/>
</dbReference>
<dbReference type="SUPFAM" id="SSF55174">
    <property type="entry name" value="Alpha-L RNA-binding motif"/>
    <property type="match status" value="1"/>
</dbReference>
<dbReference type="PROSITE" id="PS50889">
    <property type="entry name" value="S4"/>
    <property type="match status" value="1"/>
</dbReference>
<organism>
    <name type="scientific">Petrotoga mobilis (strain DSM 10674 / SJ95)</name>
    <dbReference type="NCBI Taxonomy" id="403833"/>
    <lineage>
        <taxon>Bacteria</taxon>
        <taxon>Thermotogati</taxon>
        <taxon>Thermotogota</taxon>
        <taxon>Thermotogae</taxon>
        <taxon>Petrotogales</taxon>
        <taxon>Petrotogaceae</taxon>
        <taxon>Petrotoga</taxon>
    </lineage>
</organism>
<keyword id="KW-0687">Ribonucleoprotein</keyword>
<keyword id="KW-0689">Ribosomal protein</keyword>
<keyword id="KW-0694">RNA-binding</keyword>
<keyword id="KW-0699">rRNA-binding</keyword>
<sequence length="211" mass="24795">MARYIGPLEKLSRREGINLYLKGKRSYTEKSALRKRNYVPGQHGRQKQKLTQYAMQLRSKQALKRMYGLMERQFRNTFEEAERSRSGETGEVLMQLLERRLDSVVYQMGFAPNRRTARQIVTHGHILVNGKKVNIPSYRVKVGDVIEVKEKSRNIQQVREGLELVQEGYRNIPNWLNVEIENFRGTFQRLPKIDEMDVPVPLTNIIELYSK</sequence>
<evidence type="ECO:0000255" key="1">
    <source>
        <dbReference type="HAMAP-Rule" id="MF_01306"/>
    </source>
</evidence>
<evidence type="ECO:0000305" key="2"/>
<name>RS4_PETMO</name>